<protein>
    <recommendedName>
        <fullName evidence="1">NAD-dependent protein deacylase</fullName>
        <ecNumber evidence="1 6">2.3.1.286</ecNumber>
    </recommendedName>
    <alternativeName>
        <fullName evidence="1">Regulatory protein SIR2 homolog</fullName>
    </alternativeName>
</protein>
<dbReference type="EC" id="2.3.1.286" evidence="1 6"/>
<dbReference type="EMBL" id="U89687">
    <property type="protein sequence ID" value="AAC78722.1"/>
    <property type="status" value="ALT_INIT"/>
    <property type="molecule type" value="Genomic_DNA"/>
</dbReference>
<dbReference type="EMBL" id="AE006468">
    <property type="protein sequence ID" value="AAL20150.1"/>
    <property type="molecule type" value="Genomic_DNA"/>
</dbReference>
<dbReference type="RefSeq" id="NP_460191.1">
    <molecule id="P0A2F2-1"/>
    <property type="nucleotide sequence ID" value="NC_003197.2"/>
</dbReference>
<dbReference type="RefSeq" id="WP_001191856.1">
    <property type="nucleotide sequence ID" value="NC_003197.2"/>
</dbReference>
<dbReference type="SMR" id="P0A2F2"/>
<dbReference type="STRING" id="99287.STM1221"/>
<dbReference type="PaxDb" id="99287-STM1221"/>
<dbReference type="GeneID" id="1252739"/>
<dbReference type="KEGG" id="stm:STM1221"/>
<dbReference type="PATRIC" id="fig|99287.12.peg.1290"/>
<dbReference type="HOGENOM" id="CLU_023643_3_1_6"/>
<dbReference type="OMA" id="LIHMHGE"/>
<dbReference type="PhylomeDB" id="P0A2F2"/>
<dbReference type="BioCyc" id="SENT99287:STM1221-MONOMER"/>
<dbReference type="PHI-base" id="PHI:5572"/>
<dbReference type="Proteomes" id="UP000001014">
    <property type="component" value="Chromosome"/>
</dbReference>
<dbReference type="GO" id="GO:0005737">
    <property type="term" value="C:cytoplasm"/>
    <property type="evidence" value="ECO:0007669"/>
    <property type="project" value="UniProtKB-SubCell"/>
</dbReference>
<dbReference type="GO" id="GO:0017136">
    <property type="term" value="F:histone deacetylase activity, NAD-dependent"/>
    <property type="evidence" value="ECO:0000318"/>
    <property type="project" value="GO_Central"/>
</dbReference>
<dbReference type="GO" id="GO:0070403">
    <property type="term" value="F:NAD+ binding"/>
    <property type="evidence" value="ECO:0000318"/>
    <property type="project" value="GO_Central"/>
</dbReference>
<dbReference type="GO" id="GO:0160013">
    <property type="term" value="F:NAD-dependent protein de-2-hydroxyisobutyrylase activity"/>
    <property type="evidence" value="ECO:0007669"/>
    <property type="project" value="RHEA"/>
</dbReference>
<dbReference type="GO" id="GO:0036054">
    <property type="term" value="F:protein-malonyllysine demalonylase activity"/>
    <property type="evidence" value="ECO:0007669"/>
    <property type="project" value="InterPro"/>
</dbReference>
<dbReference type="GO" id="GO:0036055">
    <property type="term" value="F:protein-succinyllysine desuccinylase activity"/>
    <property type="evidence" value="ECO:0007669"/>
    <property type="project" value="UniProtKB-UniRule"/>
</dbReference>
<dbReference type="GO" id="GO:0008270">
    <property type="term" value="F:zinc ion binding"/>
    <property type="evidence" value="ECO:0007669"/>
    <property type="project" value="UniProtKB-UniRule"/>
</dbReference>
<dbReference type="CDD" id="cd01412">
    <property type="entry name" value="SIRT5_Af1_CobB"/>
    <property type="match status" value="1"/>
</dbReference>
<dbReference type="Gene3D" id="3.30.1600.10">
    <property type="entry name" value="SIR2/SIRT2 'Small Domain"/>
    <property type="match status" value="1"/>
</dbReference>
<dbReference type="Gene3D" id="3.40.50.1220">
    <property type="entry name" value="TPP-binding domain"/>
    <property type="match status" value="1"/>
</dbReference>
<dbReference type="HAMAP" id="MF_01121">
    <property type="entry name" value="Sirtuin_ClassIII"/>
    <property type="match status" value="1"/>
</dbReference>
<dbReference type="InterPro" id="IPR029035">
    <property type="entry name" value="DHS-like_NAD/FAD-binding_dom"/>
</dbReference>
<dbReference type="InterPro" id="IPR050134">
    <property type="entry name" value="NAD-dep_sirtuin_deacylases"/>
</dbReference>
<dbReference type="InterPro" id="IPR003000">
    <property type="entry name" value="Sirtuin"/>
</dbReference>
<dbReference type="InterPro" id="IPR026591">
    <property type="entry name" value="Sirtuin_cat_small_dom_sf"/>
</dbReference>
<dbReference type="InterPro" id="IPR027546">
    <property type="entry name" value="Sirtuin_class_III"/>
</dbReference>
<dbReference type="InterPro" id="IPR026590">
    <property type="entry name" value="Ssirtuin_cat_dom"/>
</dbReference>
<dbReference type="NCBIfam" id="NF001755">
    <property type="entry name" value="PRK00481.1-5"/>
    <property type="match status" value="1"/>
</dbReference>
<dbReference type="PANTHER" id="PTHR11085:SF4">
    <property type="entry name" value="NAD-DEPENDENT PROTEIN DEACYLASE"/>
    <property type="match status" value="1"/>
</dbReference>
<dbReference type="PANTHER" id="PTHR11085">
    <property type="entry name" value="NAD-DEPENDENT PROTEIN DEACYLASE SIRTUIN-5, MITOCHONDRIAL-RELATED"/>
    <property type="match status" value="1"/>
</dbReference>
<dbReference type="Pfam" id="PF02146">
    <property type="entry name" value="SIR2"/>
    <property type="match status" value="1"/>
</dbReference>
<dbReference type="SUPFAM" id="SSF52467">
    <property type="entry name" value="DHS-like NAD/FAD-binding domain"/>
    <property type="match status" value="1"/>
</dbReference>
<dbReference type="PROSITE" id="PS50305">
    <property type="entry name" value="SIRTUIN"/>
    <property type="match status" value="1"/>
</dbReference>
<sequence>MQSRRFHRLSRFRKNKRLLRERLRQRIFFRDRVVPEMMENPRVLVLTGAGISAESGIRTFRAADGLWEEHRVEDVATPEGFARNPGLVQTFYNARRQQLQQPEIQPNAAHLALAKLEEALGDRFLLVTQNIDNLHERAGNRNIIHMHGELLKVRCSQSGQILEWNGDVMPEDKCHCCQFPAPLRPHVVWFGEMPLGMDEIYMALSMADIFIAIGTSGHVYPAAGFVHEAKLHGAHTVELNLEPSQVGSEFEEKHYGPASQVVPEFVDKFLKGL</sequence>
<proteinExistence type="evidence at protein level"/>
<comment type="function">
    <text evidence="1 3 4 6 7 10 13">NAD-dependent lysine deacetylase that specifically removes acetyl groups on target proteins. Also acts as a protein-lysine deacylase by mediating protein desuccinylation and de-2-hydroxyisobutyrylation. Modulates the activities of several proteins which are inactive in their acylated form (By similarity). Activates the enzyme acetyl-CoA synthetase (acs) by deacetylating 'Lys-609' in the inactive, acetylated form of the enzyme (PubMed:12493915, PubMed:12700259, PubMed:20889757). May also modulate the activity of other propionyl-adenosine monophosphate (AMP)-forming enzymes such as propionate--CoA ligase (prpE) (PubMed:12493915, PubMed:12700259). Overexpression compensates for a cobT deletion, suggesting it may have N(1)-alpha-phosphoribosyltransferase activity; alternatively this protein may stimulate synthesis of an enzyme with the CobT activity (PubMed:9822644). Deacetylates acetylated antitoxin TacA, may play a role in controlling the TacT-TacA toxin-antitoxin system, and thus entry into a persister state, in vivo (PubMed:28559487).</text>
</comment>
<comment type="catalytic activity">
    <reaction evidence="1 6 7">
        <text>N(6)-acetyl-L-lysyl-[protein] + NAD(+) + H2O = 2''-O-acetyl-ADP-D-ribose + nicotinamide + L-lysyl-[protein]</text>
        <dbReference type="Rhea" id="RHEA:43636"/>
        <dbReference type="Rhea" id="RHEA-COMP:9752"/>
        <dbReference type="Rhea" id="RHEA-COMP:10731"/>
        <dbReference type="ChEBI" id="CHEBI:15377"/>
        <dbReference type="ChEBI" id="CHEBI:17154"/>
        <dbReference type="ChEBI" id="CHEBI:29969"/>
        <dbReference type="ChEBI" id="CHEBI:57540"/>
        <dbReference type="ChEBI" id="CHEBI:61930"/>
        <dbReference type="ChEBI" id="CHEBI:83767"/>
        <dbReference type="EC" id="2.3.1.286"/>
    </reaction>
</comment>
<comment type="catalytic activity">
    <reaction evidence="1">
        <text>N(6)-succinyl-L-lysyl-[protein] + NAD(+) + H2O = 2''-O-succinyl-ADP-D-ribose + nicotinamide + L-lysyl-[protein]</text>
        <dbReference type="Rhea" id="RHEA:47668"/>
        <dbReference type="Rhea" id="RHEA-COMP:9752"/>
        <dbReference type="Rhea" id="RHEA-COMP:11877"/>
        <dbReference type="ChEBI" id="CHEBI:15377"/>
        <dbReference type="ChEBI" id="CHEBI:17154"/>
        <dbReference type="ChEBI" id="CHEBI:29969"/>
        <dbReference type="ChEBI" id="CHEBI:57540"/>
        <dbReference type="ChEBI" id="CHEBI:87830"/>
        <dbReference type="ChEBI" id="CHEBI:87832"/>
    </reaction>
</comment>
<comment type="catalytic activity">
    <reaction evidence="1">
        <text>N(6)-(2-hydroxyisobutanoyl)-L-lysyl-[protein] + NAD(+) + H2O = 2''-O-(2-hydroxyisobutanoyl)-ADP-D-ribose + nicotinamide + L-lysyl-[protein]</text>
        <dbReference type="Rhea" id="RHEA:24364"/>
        <dbReference type="Rhea" id="RHEA-COMP:9752"/>
        <dbReference type="Rhea" id="RHEA-COMP:15921"/>
        <dbReference type="ChEBI" id="CHEBI:15377"/>
        <dbReference type="ChEBI" id="CHEBI:17154"/>
        <dbReference type="ChEBI" id="CHEBI:29969"/>
        <dbReference type="ChEBI" id="CHEBI:57540"/>
        <dbReference type="ChEBI" id="CHEBI:144968"/>
        <dbReference type="ChEBI" id="CHEBI:144969"/>
    </reaction>
</comment>
<comment type="cofactor">
    <cofactor evidence="1">
        <name>Zn(2+)</name>
        <dbReference type="ChEBI" id="CHEBI:29105"/>
    </cofactor>
    <text evidence="1">Binds 1 zinc ion per subunit.</text>
</comment>
<comment type="activity regulation">
    <text evidence="7">Protein deacetylation is inhibited by nicotinamide.</text>
</comment>
<comment type="subunit">
    <text evidence="6">Both isoforms are monomers (PubMed:20889757).</text>
</comment>
<comment type="subcellular location">
    <subcellularLocation>
        <location evidence="1">Cytoplasm</location>
    </subcellularLocation>
</comment>
<comment type="alternative products">
    <event type="alternative promoter"/>
    <isoform>
        <id>P0A2F2-1</id>
        <name evidence="6">CobB-Long</name>
        <sequence type="displayed"/>
    </isoform>
    <isoform>
        <id>P0A2F2-2</id>
        <name evidence="6">CobB-Short</name>
        <sequence type="described" ref="VSP_058462"/>
    </isoform>
</comment>
<comment type="induction">
    <text evidence="6">Most expressed in mid- to late-log growth phases (at protein level) (PubMed:20889757). Has 3 promoters, P1 (upstream of nagK) gives rise to a nagK-cobB transcript, P2 (within the nagK coding region) gives rise to a transcript able to generate both CobB isoforms, while P3 (nucleotide 44 of the long isoform) can only give rise to the CobB-Short isoform (PubMed:20889757).</text>
</comment>
<comment type="domain">
    <text evidence="1">2 residues (Tyr-92 and Arg-95) present in a large hydrophobic pocket are probably involved in substrate specificity. They are important for desuccinylation activity, but dispensable for deacetylation activity.</text>
</comment>
<comment type="disruption phenotype">
    <text evidence="4 5 8 9">Single mutant grows on cobinamide (CBI), CBI plus 5,6-dimethylbenzimidazole (DMB) and cobalamin (CBL); double cobB-cobT deletion mutants do not grow on CBI plus DMB (PubMed:8206834). Single mutant does not grow on propionate (PubMed:8955330). Acetyl-CoA synthetase (acs) accumulates in an inactive, acetylated form (PubMed:12493915). Considerably decreased growth on 1,2-propanediol, cells do not excrete more propanediol than wild-type (PubMed:12700259).</text>
</comment>
<comment type="miscellaneous">
    <text evidence="15 16">Originally isolated genetically as functioning in cobalamin biosynthesis and in propionate catabolism (PubMed:8206834, PubMed:8955330).</text>
</comment>
<comment type="miscellaneous">
    <molecule>Isoform CobB-Long</molecule>
    <text evidence="6">The less prevalent isoform.</text>
</comment>
<comment type="miscellaneous">
    <molecule>Isoform CobB-Short</molecule>
    <text evidence="6">5- to 20-fold higher levels of this protein are seen in rich and minimal media.</text>
</comment>
<comment type="similarity">
    <text evidence="1">Belongs to the sirtuin family. Class III subfamily.</text>
</comment>
<comment type="sequence caution" evidence="14">
    <conflict type="erroneous initiation">
        <sequence resource="EMBL-CDS" id="AAC78722"/>
    </conflict>
    <text>Truncated N-terminus.</text>
</comment>
<accession>P0A2F2</accession>
<accession>P97013</accession>
<name>NPD_SALTY</name>
<feature type="chain" id="PRO_0000110348" description="NAD-dependent protein deacylase">
    <location>
        <begin position="1"/>
        <end position="273"/>
    </location>
</feature>
<feature type="domain" description="Deacetylase sirtuin-type" evidence="2">
    <location>
        <begin position="20"/>
        <end position="272"/>
    </location>
</feature>
<feature type="active site" description="Proton acceptor" evidence="1">
    <location>
        <position position="147"/>
    </location>
</feature>
<feature type="binding site" evidence="1">
    <location>
        <begin position="48"/>
        <end position="67"/>
    </location>
    <ligand>
        <name>NAD(+)</name>
        <dbReference type="ChEBI" id="CHEBI:57540"/>
    </ligand>
</feature>
<feature type="binding site" evidence="1">
    <location>
        <position position="92"/>
    </location>
    <ligand>
        <name>substrate</name>
    </ligand>
</feature>
<feature type="binding site" evidence="1">
    <location>
        <position position="95"/>
    </location>
    <ligand>
        <name>substrate</name>
    </ligand>
</feature>
<feature type="binding site" evidence="1">
    <location>
        <begin position="129"/>
        <end position="132"/>
    </location>
    <ligand>
        <name>NAD(+)</name>
        <dbReference type="ChEBI" id="CHEBI:57540"/>
    </ligand>
</feature>
<feature type="binding site" evidence="1">
    <location>
        <position position="155"/>
    </location>
    <ligand>
        <name>Zn(2+)</name>
        <dbReference type="ChEBI" id="CHEBI:29105"/>
    </ligand>
</feature>
<feature type="binding site" evidence="1">
    <location>
        <position position="174"/>
    </location>
    <ligand>
        <name>Zn(2+)</name>
        <dbReference type="ChEBI" id="CHEBI:29105"/>
    </ligand>
</feature>
<feature type="binding site" evidence="1">
    <location>
        <begin position="214"/>
        <end position="216"/>
    </location>
    <ligand>
        <name>NAD(+)</name>
        <dbReference type="ChEBI" id="CHEBI:57540"/>
    </ligand>
</feature>
<feature type="binding site" evidence="1">
    <location>
        <begin position="240"/>
        <end position="242"/>
    </location>
    <ligand>
        <name>NAD(+)</name>
        <dbReference type="ChEBI" id="CHEBI:57540"/>
    </ligand>
</feature>
<feature type="binding site" evidence="1">
    <location>
        <position position="258"/>
    </location>
    <ligand>
        <name>NAD(+)</name>
        <dbReference type="ChEBI" id="CHEBI:57540"/>
    </ligand>
</feature>
<feature type="splice variant" id="VSP_058462" description="In isoform CobB-Short.">
    <location>
        <begin position="1"/>
        <end position="37"/>
    </location>
</feature>
<feature type="mutagenesis site" description="Complements a cobB deletion, produces only the short isoform. Has deacylation and phosphoribosyltransferase activities." evidence="6">
    <original>M</original>
    <variation>A</variation>
    <location>
        <position position="1"/>
    </location>
</feature>
<feature type="mutagenesis site" description="Complements a cobB deletion, produces only the long isoform. Has deacylation and phosphoribosyltransferase activities." evidence="6">
    <original>MM</original>
    <variation>AA</variation>
    <location>
        <begin position="37"/>
        <end position="38"/>
    </location>
</feature>
<feature type="sequence conflict" description="In Ref. 1; AAC78722." evidence="12" ref="1">
    <original>KLEEALGDR</original>
    <variation>NLKKRLAIA</variation>
    <location>
        <begin position="115"/>
        <end position="123"/>
    </location>
</feature>
<feature type="sequence conflict" description="In Ref. 1; AAC78722." evidence="12" ref="1">
    <original>H</original>
    <variation>Q</variation>
    <location>
        <position position="145"/>
    </location>
</feature>
<feature type="sequence conflict" description="In Ref. 1; AAC78722." evidence="12" ref="1">
    <original>S</original>
    <variation>N</variation>
    <location>
        <position position="248"/>
    </location>
</feature>
<evidence type="ECO:0000255" key="1">
    <source>
        <dbReference type="HAMAP-Rule" id="MF_01121"/>
    </source>
</evidence>
<evidence type="ECO:0000255" key="2">
    <source>
        <dbReference type="PROSITE-ProRule" id="PRU00236"/>
    </source>
</evidence>
<evidence type="ECO:0000269" key="3">
    <source>
    </source>
</evidence>
<evidence type="ECO:0000269" key="4">
    <source>
    </source>
</evidence>
<evidence type="ECO:0000269" key="5">
    <source>
    </source>
</evidence>
<evidence type="ECO:0000269" key="6">
    <source>
    </source>
</evidence>
<evidence type="ECO:0000269" key="7">
    <source>
    </source>
</evidence>
<evidence type="ECO:0000269" key="8">
    <source>
    </source>
</evidence>
<evidence type="ECO:0000269" key="9">
    <source>
    </source>
</evidence>
<evidence type="ECO:0000269" key="10">
    <source>
    </source>
</evidence>
<evidence type="ECO:0000303" key="11">
    <source>
    </source>
</evidence>
<evidence type="ECO:0000305" key="12"/>
<evidence type="ECO:0000305" key="13">
    <source>
    </source>
</evidence>
<evidence type="ECO:0000305" key="14">
    <source>
    </source>
</evidence>
<evidence type="ECO:0000305" key="15">
    <source>
    </source>
</evidence>
<evidence type="ECO:0000305" key="16">
    <source>
    </source>
</evidence>
<reference key="1">
    <citation type="journal article" date="1996" name="J. Bacteriol.">
        <title>cobB function is required for catabolism of propionate in Salmonella typhimurium LT2: evidence for existence of a substitute function for CobB within the 1,2-propanediol utilization (pdu) operon.</title>
        <authorList>
            <person name="Tsang A.W."/>
            <person name="Escalante-Semerena J.C."/>
        </authorList>
    </citation>
    <scope>NUCLEOTIDE SEQUENCE [GENOMIC DNA]</scope>
    <scope>DISRUPTION PHENOTYPE</scope>
    <source>
        <strain>LT2 / SGSC1412 / ATCC 700720</strain>
    </source>
</reference>
<reference key="2">
    <citation type="journal article" date="2001" name="Nature">
        <title>Complete genome sequence of Salmonella enterica serovar Typhimurium LT2.</title>
        <authorList>
            <person name="McClelland M."/>
            <person name="Sanderson K.E."/>
            <person name="Spieth J."/>
            <person name="Clifton S.W."/>
            <person name="Latreille P."/>
            <person name="Courtney L."/>
            <person name="Porwollik S."/>
            <person name="Ali J."/>
            <person name="Dante M."/>
            <person name="Du F."/>
            <person name="Hou S."/>
            <person name="Layman D."/>
            <person name="Leonard S."/>
            <person name="Nguyen C."/>
            <person name="Scott K."/>
            <person name="Holmes A."/>
            <person name="Grewal N."/>
            <person name="Mulvaney E."/>
            <person name="Ryan E."/>
            <person name="Sun H."/>
            <person name="Florea L."/>
            <person name="Miller W."/>
            <person name="Stoneking T."/>
            <person name="Nhan M."/>
            <person name="Waterston R."/>
            <person name="Wilson R.K."/>
        </authorList>
    </citation>
    <scope>NUCLEOTIDE SEQUENCE [LARGE SCALE GENOMIC DNA]</scope>
    <source>
        <strain>LT2 / SGSC1412 / ATCC 700720</strain>
    </source>
</reference>
<reference key="3">
    <citation type="journal article" date="1994" name="J. Bacteriol.">
        <title>The cobT gene of Salmonella typhimurium encodes the NaMN: 5,6-dimethylbenzimidazole phosphoribosyltransferase responsible for the synthesis of N1-(5-phospho-alpha-D-ribosyl)-5,6-dimethylbenzimidazole, an intermediate in the synthesis of the nucleotide loop of cobalamin.</title>
        <authorList>
            <person name="Trzebiatowski J.R."/>
            <person name="O'Toole G.A."/>
            <person name="Escalante-Semerena J.C."/>
        </authorList>
    </citation>
    <scope>DISRUPTION PHENOTYPE</scope>
    <source>
        <strain>LT2</strain>
    </source>
</reference>
<reference key="4">
    <citation type="journal article" date="1998" name="J. Biol. Chem.">
        <title>CobB, a new member of the SIR2 family of eucaryotic regulatory proteins, is required to compensate for the lack of nicotinate mononucleotide:5,6-dimethylbenzimidazole phosphoribosyltransferase activity in cobT mutants during cobalamin biosynthesis in Salmonella typhimurium LT2.</title>
        <authorList>
            <person name="Tsang A.W."/>
            <person name="Escalante-Semerena J.C."/>
        </authorList>
    </citation>
    <scope>FUNCTION</scope>
    <source>
        <strain>LT2 / SGSC1412 / ATCC 700720</strain>
    </source>
</reference>
<reference key="5">
    <citation type="journal article" date="2002" name="Science">
        <title>Sir2-dependent activation of acetyl-CoA synthetase by deacetylation of active lysine.</title>
        <authorList>
            <person name="Starai V.J."/>
            <person name="Celic I."/>
            <person name="Cole R.N."/>
            <person name="Boeke J.D."/>
            <person name="Escalante-Semerena J.C."/>
        </authorList>
    </citation>
    <scope>FUNCTION</scope>
    <scope>DISRUPTION PHENOTYPE</scope>
    <source>
        <strain>LT2 / SGSC1412 / ATCC 700720</strain>
    </source>
</reference>
<reference key="6">
    <citation type="journal article" date="2000" name="Proc. Natl. Acad. Sci. U.S.A.">
        <title>A phylogenetically conserved NAD+-dependent protein deacetylase activity in the Sir2 protein family.</title>
        <authorList>
            <person name="Smith J.S."/>
            <person name="Brachmann C.B."/>
            <person name="Celic I."/>
            <person name="Kenna M.A."/>
            <person name="Muhammad S."/>
            <person name="Starai V.J."/>
            <person name="Avalos J.L."/>
            <person name="Escalante-Semerena J.C."/>
            <person name="Grubmeyer C."/>
            <person name="Wolberger C."/>
            <person name="Boeke J.D."/>
        </authorList>
    </citation>
    <scope>FUNCTION AS AN NAD-DEPENDENT DEACETYLASE</scope>
    <source>
        <strain>LT2 / SGSC1412 / ATCC 700720</strain>
    </source>
</reference>
<reference key="7">
    <citation type="journal article" date="2003" name="J. Bacteriol.">
        <title>Propionyl coenzyme A is a common intermediate in the 1,2-propanediol and propionate catabolic pathways needed for expression of the prpBCDE operon during growth of Salmonella enterica on 1,2-propanediol.</title>
        <authorList>
            <person name="Palacios S."/>
            <person name="Starai V.J."/>
            <person name="Escalante-Semerena J.C."/>
        </authorList>
    </citation>
    <scope>FUNCTION</scope>
    <scope>DISRUPTION PHENOTYPE</scope>
    <source>
        <strain>LT2</strain>
    </source>
</reference>
<reference key="8">
    <citation type="journal article" date="2010" name="J. Bacteriol.">
        <title>Biologically active isoforms of CobB sirtuin deacetylase in Salmonella enterica and Erwinia amylovora.</title>
        <authorList>
            <person name="Tucker A.C."/>
            <person name="Escalante-Semerena J.C."/>
        </authorList>
    </citation>
    <scope>FUNCTION</scope>
    <scope>CATALYTIC ACTIVITY</scope>
    <scope>ALTERNATIVE PROMOTER USAGE (ISOFORMS COBB-LONG AND COBB-SHORT)</scope>
    <scope>SUBUNIT</scope>
    <scope>INDUCTION</scope>
    <scope>MUTAGENESIS OF MET-1 AND 37-MET-MET-38</scope>
    <source>
        <strain>LT2</strain>
    </source>
</reference>
<reference key="9">
    <citation type="journal article" date="2017" name="MBio">
        <title>A Toxin Involved in Salmonella Persistence Regulates Its Activity by Acetylating Its Cognate Antitoxin, a Modification Reversed by CobB Sirtuin Deacetylase.</title>
        <authorList>
            <person name="VanDrisse C.M."/>
            <person name="Parks A.R."/>
            <person name="Escalante-Semerena J.C."/>
        </authorList>
    </citation>
    <scope>FUNCTION</scope>
    <scope>CATALYTIC ACTIVITY</scope>
    <scope>ACTIVITY REGULATION</scope>
    <source>
        <strain>LT2 / SGSC1412 / ATCC 700720</strain>
    </source>
</reference>
<keyword id="KW-0877">Alternative promoter usage</keyword>
<keyword id="KW-0963">Cytoplasm</keyword>
<keyword id="KW-0479">Metal-binding</keyword>
<keyword id="KW-0520">NAD</keyword>
<keyword id="KW-1185">Reference proteome</keyword>
<keyword id="KW-0808">Transferase</keyword>
<keyword id="KW-0862">Zinc</keyword>
<organism>
    <name type="scientific">Salmonella typhimurium (strain LT2 / SGSC1412 / ATCC 700720)</name>
    <dbReference type="NCBI Taxonomy" id="99287"/>
    <lineage>
        <taxon>Bacteria</taxon>
        <taxon>Pseudomonadati</taxon>
        <taxon>Pseudomonadota</taxon>
        <taxon>Gammaproteobacteria</taxon>
        <taxon>Enterobacterales</taxon>
        <taxon>Enterobacteriaceae</taxon>
        <taxon>Salmonella</taxon>
    </lineage>
</organism>
<gene>
    <name evidence="1 11" type="primary">cobB</name>
    <name type="ordered locus">STM1221</name>
</gene>